<evidence type="ECO:0000250" key="1"/>
<evidence type="ECO:0000255" key="2"/>
<evidence type="ECO:0000256" key="3">
    <source>
        <dbReference type="SAM" id="MobiDB-lite"/>
    </source>
</evidence>
<evidence type="ECO:0000305" key="4"/>
<proteinExistence type="uncertain"/>
<sequence>MDASLEKIADPTLAEMGKNLKEAVKMLEDSQRRTEEENGKKLISRDIPGPLQGSGQDMVSILQLVQNLMHGDEDEEPQSPRIQNIGEQGHVAVLGHSLGAYILTLDEEKLRKLTTRILSDTTLWLCRIFRYENGCAYFHEEEREGLAKICRLAIHSQYEDFVVDGFSGLYNKKPVIYLSAAARPGLGQYLCNQLGLPFPCLCRVPCNTMFGSQHQMDVAFLEKLIKDDIERGRLPLLLVANAGTAAVGHTDKIGRLKELCEQYGIWLHVEGVNLATLALGYVSSSVLAAAKCDSMTMTPGPWLGLPAVPAVTLYKHDPALTLVAGLISNKPTDKLRALPLWLSLQYLGLDGFVERIKHACQLSQWLQESLKKVNYIKILVEDELSSPVVVFRFFQELPGSDPVFKAVPVPNMTPSAVGRERHSCDALNLWLGEQLKQLVPASGLTVMDLEAEGTCLRFSPLMTAAGMIS</sequence>
<gene>
    <name type="primary">PDXDC2P</name>
    <name type="synonym">PDXDC2</name>
</gene>
<comment type="cofactor">
    <cofactor evidence="1">
        <name>pyridoxal 5'-phosphate</name>
        <dbReference type="ChEBI" id="CHEBI:597326"/>
    </cofactor>
</comment>
<comment type="interaction">
    <interactant intactId="EBI-1048095">
        <id>Q6P474</id>
    </interactant>
    <interactant intactId="EBI-8043559">
        <id>P37023</id>
        <label>ACVRL1</label>
    </interactant>
    <organismsDiffer>false</organismsDiffer>
    <experiments>2</experiments>
</comment>
<comment type="similarity">
    <text evidence="4">Belongs to the group II decarboxylase family.</text>
</comment>
<comment type="caution">
    <text evidence="4">Could be the product of a pseudogene.</text>
</comment>
<dbReference type="EC" id="4.1.1.-"/>
<dbReference type="EMBL" id="AK292860">
    <property type="protein sequence ID" value="BAF85549.1"/>
    <property type="molecule type" value="mRNA"/>
</dbReference>
<dbReference type="EMBL" id="AC009022">
    <property type="status" value="NOT_ANNOTATED_CDS"/>
    <property type="molecule type" value="Genomic_DNA"/>
</dbReference>
<dbReference type="EMBL" id="AC026468">
    <property type="status" value="NOT_ANNOTATED_CDS"/>
    <property type="molecule type" value="Genomic_DNA"/>
</dbReference>
<dbReference type="SMR" id="Q6P474"/>
<dbReference type="FunCoup" id="Q6P474">
    <property type="interactions" value="372"/>
</dbReference>
<dbReference type="IntAct" id="Q6P474">
    <property type="interactions" value="9"/>
</dbReference>
<dbReference type="iPTMnet" id="Q6P474"/>
<dbReference type="MetOSite" id="Q6P474"/>
<dbReference type="PhosphoSitePlus" id="Q6P474"/>
<dbReference type="SwissPalm" id="Q6P474"/>
<dbReference type="BioMuta" id="HGNC:27559"/>
<dbReference type="DMDM" id="218512123"/>
<dbReference type="jPOST" id="Q6P474"/>
<dbReference type="MassIVE" id="Q6P474"/>
<dbReference type="ProteomicsDB" id="66949"/>
<dbReference type="AGR" id="HGNC:27559"/>
<dbReference type="AGR" id="HGNC:53158"/>
<dbReference type="GeneCards" id="PDXDC2P"/>
<dbReference type="HGNC" id="HGNC:27559">
    <property type="gene designation" value="PDXDC2P"/>
</dbReference>
<dbReference type="neXtProt" id="NX_Q6P474"/>
<dbReference type="InParanoid" id="Q6P474"/>
<dbReference type="PAN-GO" id="Q6P474">
    <property type="GO annotations" value="1 GO annotation based on evolutionary models"/>
</dbReference>
<dbReference type="PhylomeDB" id="Q6P474"/>
<dbReference type="PathwayCommons" id="Q6P474"/>
<dbReference type="SignaLink" id="Q6P474"/>
<dbReference type="ChiTaRS" id="PDXDC2P-NPIPB14P">
    <property type="organism name" value="human"/>
</dbReference>
<dbReference type="Pharos" id="Q6P474">
    <property type="development level" value="Tdark"/>
</dbReference>
<dbReference type="Proteomes" id="UP000005640">
    <property type="component" value="Unplaced"/>
</dbReference>
<dbReference type="RNAct" id="Q6P474">
    <property type="molecule type" value="protein"/>
</dbReference>
<dbReference type="GO" id="GO:0043231">
    <property type="term" value="C:intracellular membrane-bounded organelle"/>
    <property type="evidence" value="ECO:0000318"/>
    <property type="project" value="GO_Central"/>
</dbReference>
<dbReference type="GO" id="GO:0016831">
    <property type="term" value="F:carboxy-lyase activity"/>
    <property type="evidence" value="ECO:0007669"/>
    <property type="project" value="UniProtKB-KW"/>
</dbReference>
<dbReference type="GO" id="GO:0030170">
    <property type="term" value="F:pyridoxal phosphate binding"/>
    <property type="evidence" value="ECO:0007669"/>
    <property type="project" value="InterPro"/>
</dbReference>
<dbReference type="GO" id="GO:0019752">
    <property type="term" value="P:carboxylic acid metabolic process"/>
    <property type="evidence" value="ECO:0007669"/>
    <property type="project" value="InterPro"/>
</dbReference>
<dbReference type="FunFam" id="3.40.640.10:FF:000036">
    <property type="entry name" value="pyridoxal-dependent decarboxylase domain-containing protein 1 isoform X2"/>
    <property type="match status" value="1"/>
</dbReference>
<dbReference type="FunFam" id="3.90.1150.170:FF:000002">
    <property type="entry name" value="pyridoxal-dependent decarboxylase domain-containing protein 1 isoform X2"/>
    <property type="match status" value="1"/>
</dbReference>
<dbReference type="Gene3D" id="3.90.1150.170">
    <property type="match status" value="1"/>
</dbReference>
<dbReference type="Gene3D" id="3.40.640.10">
    <property type="entry name" value="Type I PLP-dependent aspartate aminotransferase-like (Major domain)"/>
    <property type="match status" value="1"/>
</dbReference>
<dbReference type="InterPro" id="IPR050477">
    <property type="entry name" value="GrpII_AminoAcid_Decarb"/>
</dbReference>
<dbReference type="InterPro" id="IPR055103">
    <property type="entry name" value="PDXDC1-like_2nd"/>
</dbReference>
<dbReference type="InterPro" id="IPR002129">
    <property type="entry name" value="PyrdxlP-dep_de-COase"/>
</dbReference>
<dbReference type="InterPro" id="IPR015424">
    <property type="entry name" value="PyrdxlP-dep_Trfase"/>
</dbReference>
<dbReference type="InterPro" id="IPR015421">
    <property type="entry name" value="PyrdxlP-dep_Trfase_major"/>
</dbReference>
<dbReference type="PANTHER" id="PTHR42735">
    <property type="match status" value="1"/>
</dbReference>
<dbReference type="PANTHER" id="PTHR42735:SF1">
    <property type="entry name" value="PYRIDOXAL-DEPENDENT DECARBOXYLASE DOMAIN-CONTAINING PROTEIN 1-RELATED"/>
    <property type="match status" value="1"/>
</dbReference>
<dbReference type="Pfam" id="PF22930">
    <property type="entry name" value="PDXDC1-like_cen"/>
    <property type="match status" value="1"/>
</dbReference>
<dbReference type="Pfam" id="PF00282">
    <property type="entry name" value="Pyridoxal_deC"/>
    <property type="match status" value="1"/>
</dbReference>
<dbReference type="SUPFAM" id="SSF53383">
    <property type="entry name" value="PLP-dependent transferases"/>
    <property type="match status" value="1"/>
</dbReference>
<protein>
    <recommendedName>
        <fullName>Putative pyridoxal-dependent decarboxylase domain-containing protein 2</fullName>
        <ecNumber>4.1.1.-</ecNumber>
    </recommendedName>
    <alternativeName>
        <fullName>pyridoxal-dependent decarboxylase domain-containing 2 pseudogene</fullName>
    </alternativeName>
</protein>
<name>PDXD2_HUMAN</name>
<feature type="chain" id="PRO_0000311216" description="Putative pyridoxal-dependent decarboxylase domain-containing protein 2">
    <location>
        <begin position="1"/>
        <end position="469"/>
    </location>
</feature>
<feature type="region of interest" description="Disordered" evidence="3">
    <location>
        <begin position="28"/>
        <end position="47"/>
    </location>
</feature>
<feature type="coiled-coil region" evidence="2">
    <location>
        <begin position="12"/>
        <end position="40"/>
    </location>
</feature>
<feature type="compositionally biased region" description="Basic and acidic residues" evidence="3">
    <location>
        <begin position="28"/>
        <end position="44"/>
    </location>
</feature>
<feature type="sequence variant" id="VAR_037159" description="In dbSNP:rs3169319.">
    <original>M</original>
    <variation>V</variation>
    <location>
        <position position="209"/>
    </location>
</feature>
<feature type="sequence variant" id="VAR_037160" description="In dbSNP:rs11648231.">
    <original>L</original>
    <variation>F</variation>
    <location>
        <position position="429"/>
    </location>
</feature>
<feature type="sequence variant" id="VAR_037161" description="In dbSNP:rs929843.">
    <original>L</original>
    <variation>R</variation>
    <location>
        <position position="429"/>
    </location>
</feature>
<keyword id="KW-0175">Coiled coil</keyword>
<keyword id="KW-0210">Decarboxylase</keyword>
<keyword id="KW-0456">Lyase</keyword>
<keyword id="KW-1267">Proteomics identification</keyword>
<keyword id="KW-0663">Pyridoxal phosphate</keyword>
<keyword id="KW-1185">Reference proteome</keyword>
<accession>Q6P474</accession>
<accession>A8K9Z5</accession>
<reference key="1">
    <citation type="journal article" date="2004" name="Nat. Genet.">
        <title>Complete sequencing and characterization of 21,243 full-length human cDNAs.</title>
        <authorList>
            <person name="Ota T."/>
            <person name="Suzuki Y."/>
            <person name="Nishikawa T."/>
            <person name="Otsuki T."/>
            <person name="Sugiyama T."/>
            <person name="Irie R."/>
            <person name="Wakamatsu A."/>
            <person name="Hayashi K."/>
            <person name="Sato H."/>
            <person name="Nagai K."/>
            <person name="Kimura K."/>
            <person name="Makita H."/>
            <person name="Sekine M."/>
            <person name="Obayashi M."/>
            <person name="Nishi T."/>
            <person name="Shibahara T."/>
            <person name="Tanaka T."/>
            <person name="Ishii S."/>
            <person name="Yamamoto J."/>
            <person name="Saito K."/>
            <person name="Kawai Y."/>
            <person name="Isono Y."/>
            <person name="Nakamura Y."/>
            <person name="Nagahari K."/>
            <person name="Murakami K."/>
            <person name="Yasuda T."/>
            <person name="Iwayanagi T."/>
            <person name="Wagatsuma M."/>
            <person name="Shiratori A."/>
            <person name="Sudo H."/>
            <person name="Hosoiri T."/>
            <person name="Kaku Y."/>
            <person name="Kodaira H."/>
            <person name="Kondo H."/>
            <person name="Sugawara M."/>
            <person name="Takahashi M."/>
            <person name="Kanda K."/>
            <person name="Yokoi T."/>
            <person name="Furuya T."/>
            <person name="Kikkawa E."/>
            <person name="Omura Y."/>
            <person name="Abe K."/>
            <person name="Kamihara K."/>
            <person name="Katsuta N."/>
            <person name="Sato K."/>
            <person name="Tanikawa M."/>
            <person name="Yamazaki M."/>
            <person name="Ninomiya K."/>
            <person name="Ishibashi T."/>
            <person name="Yamashita H."/>
            <person name="Murakawa K."/>
            <person name="Fujimori K."/>
            <person name="Tanai H."/>
            <person name="Kimata M."/>
            <person name="Watanabe M."/>
            <person name="Hiraoka S."/>
            <person name="Chiba Y."/>
            <person name="Ishida S."/>
            <person name="Ono Y."/>
            <person name="Takiguchi S."/>
            <person name="Watanabe S."/>
            <person name="Yosida M."/>
            <person name="Hotuta T."/>
            <person name="Kusano J."/>
            <person name="Kanehori K."/>
            <person name="Takahashi-Fujii A."/>
            <person name="Hara H."/>
            <person name="Tanase T.-O."/>
            <person name="Nomura Y."/>
            <person name="Togiya S."/>
            <person name="Komai F."/>
            <person name="Hara R."/>
            <person name="Takeuchi K."/>
            <person name="Arita M."/>
            <person name="Imose N."/>
            <person name="Musashino K."/>
            <person name="Yuuki H."/>
            <person name="Oshima A."/>
            <person name="Sasaki N."/>
            <person name="Aotsuka S."/>
            <person name="Yoshikawa Y."/>
            <person name="Matsunawa H."/>
            <person name="Ichihara T."/>
            <person name="Shiohata N."/>
            <person name="Sano S."/>
            <person name="Moriya S."/>
            <person name="Momiyama H."/>
            <person name="Satoh N."/>
            <person name="Takami S."/>
            <person name="Terashima Y."/>
            <person name="Suzuki O."/>
            <person name="Nakagawa S."/>
            <person name="Senoh A."/>
            <person name="Mizoguchi H."/>
            <person name="Goto Y."/>
            <person name="Shimizu F."/>
            <person name="Wakebe H."/>
            <person name="Hishigaki H."/>
            <person name="Watanabe T."/>
            <person name="Sugiyama A."/>
            <person name="Takemoto M."/>
            <person name="Kawakami B."/>
            <person name="Yamazaki M."/>
            <person name="Watanabe K."/>
            <person name="Kumagai A."/>
            <person name="Itakura S."/>
            <person name="Fukuzumi Y."/>
            <person name="Fujimori Y."/>
            <person name="Komiyama M."/>
            <person name="Tashiro H."/>
            <person name="Tanigami A."/>
            <person name="Fujiwara T."/>
            <person name="Ono T."/>
            <person name="Yamada K."/>
            <person name="Fujii Y."/>
            <person name="Ozaki K."/>
            <person name="Hirao M."/>
            <person name="Ohmori Y."/>
            <person name="Kawabata A."/>
            <person name="Hikiji T."/>
            <person name="Kobatake N."/>
            <person name="Inagaki H."/>
            <person name="Ikema Y."/>
            <person name="Okamoto S."/>
            <person name="Okitani R."/>
            <person name="Kawakami T."/>
            <person name="Noguchi S."/>
            <person name="Itoh T."/>
            <person name="Shigeta K."/>
            <person name="Senba T."/>
            <person name="Matsumura K."/>
            <person name="Nakajima Y."/>
            <person name="Mizuno T."/>
            <person name="Morinaga M."/>
            <person name="Sasaki M."/>
            <person name="Togashi T."/>
            <person name="Oyama M."/>
            <person name="Hata H."/>
            <person name="Watanabe M."/>
            <person name="Komatsu T."/>
            <person name="Mizushima-Sugano J."/>
            <person name="Satoh T."/>
            <person name="Shirai Y."/>
            <person name="Takahashi Y."/>
            <person name="Nakagawa K."/>
            <person name="Okumura K."/>
            <person name="Nagase T."/>
            <person name="Nomura N."/>
            <person name="Kikuchi H."/>
            <person name="Masuho Y."/>
            <person name="Yamashita R."/>
            <person name="Nakai K."/>
            <person name="Yada T."/>
            <person name="Nakamura Y."/>
            <person name="Ohara O."/>
            <person name="Isogai T."/>
            <person name="Sugano S."/>
        </authorList>
    </citation>
    <scope>NUCLEOTIDE SEQUENCE [LARGE SCALE MRNA]</scope>
    <source>
        <tissue>Trachea</tissue>
    </source>
</reference>
<reference key="2">
    <citation type="journal article" date="2004" name="Nature">
        <title>The sequence and analysis of duplication-rich human chromosome 16.</title>
        <authorList>
            <person name="Martin J."/>
            <person name="Han C."/>
            <person name="Gordon L.A."/>
            <person name="Terry A."/>
            <person name="Prabhakar S."/>
            <person name="She X."/>
            <person name="Xie G."/>
            <person name="Hellsten U."/>
            <person name="Chan Y.M."/>
            <person name="Altherr M."/>
            <person name="Couronne O."/>
            <person name="Aerts A."/>
            <person name="Bajorek E."/>
            <person name="Black S."/>
            <person name="Blumer H."/>
            <person name="Branscomb E."/>
            <person name="Brown N.C."/>
            <person name="Bruno W.J."/>
            <person name="Buckingham J.M."/>
            <person name="Callen D.F."/>
            <person name="Campbell C.S."/>
            <person name="Campbell M.L."/>
            <person name="Campbell E.W."/>
            <person name="Caoile C."/>
            <person name="Challacombe J.F."/>
            <person name="Chasteen L.A."/>
            <person name="Chertkov O."/>
            <person name="Chi H.C."/>
            <person name="Christensen M."/>
            <person name="Clark L.M."/>
            <person name="Cohn J.D."/>
            <person name="Denys M."/>
            <person name="Detter J.C."/>
            <person name="Dickson M."/>
            <person name="Dimitrijevic-Bussod M."/>
            <person name="Escobar J."/>
            <person name="Fawcett J.J."/>
            <person name="Flowers D."/>
            <person name="Fotopulos D."/>
            <person name="Glavina T."/>
            <person name="Gomez M."/>
            <person name="Gonzales E."/>
            <person name="Goodstein D."/>
            <person name="Goodwin L.A."/>
            <person name="Grady D.L."/>
            <person name="Grigoriev I."/>
            <person name="Groza M."/>
            <person name="Hammon N."/>
            <person name="Hawkins T."/>
            <person name="Haydu L."/>
            <person name="Hildebrand C.E."/>
            <person name="Huang W."/>
            <person name="Israni S."/>
            <person name="Jett J."/>
            <person name="Jewett P.B."/>
            <person name="Kadner K."/>
            <person name="Kimball H."/>
            <person name="Kobayashi A."/>
            <person name="Krawczyk M.-C."/>
            <person name="Leyba T."/>
            <person name="Longmire J.L."/>
            <person name="Lopez F."/>
            <person name="Lou Y."/>
            <person name="Lowry S."/>
            <person name="Ludeman T."/>
            <person name="Manohar C.F."/>
            <person name="Mark G.A."/>
            <person name="McMurray K.L."/>
            <person name="Meincke L.J."/>
            <person name="Morgan J."/>
            <person name="Moyzis R.K."/>
            <person name="Mundt M.O."/>
            <person name="Munk A.C."/>
            <person name="Nandkeshwar R.D."/>
            <person name="Pitluck S."/>
            <person name="Pollard M."/>
            <person name="Predki P."/>
            <person name="Parson-Quintana B."/>
            <person name="Ramirez L."/>
            <person name="Rash S."/>
            <person name="Retterer J."/>
            <person name="Ricke D.O."/>
            <person name="Robinson D.L."/>
            <person name="Rodriguez A."/>
            <person name="Salamov A."/>
            <person name="Saunders E.H."/>
            <person name="Scott D."/>
            <person name="Shough T."/>
            <person name="Stallings R.L."/>
            <person name="Stalvey M."/>
            <person name="Sutherland R.D."/>
            <person name="Tapia R."/>
            <person name="Tesmer J.G."/>
            <person name="Thayer N."/>
            <person name="Thompson L.S."/>
            <person name="Tice H."/>
            <person name="Torney D.C."/>
            <person name="Tran-Gyamfi M."/>
            <person name="Tsai M."/>
            <person name="Ulanovsky L.E."/>
            <person name="Ustaszewska A."/>
            <person name="Vo N."/>
            <person name="White P.S."/>
            <person name="Williams A.L."/>
            <person name="Wills P.L."/>
            <person name="Wu J.-R."/>
            <person name="Wu K."/>
            <person name="Yang J."/>
            <person name="DeJong P."/>
            <person name="Bruce D."/>
            <person name="Doggett N.A."/>
            <person name="Deaven L."/>
            <person name="Schmutz J."/>
            <person name="Grimwood J."/>
            <person name="Richardson P."/>
            <person name="Rokhsar D.S."/>
            <person name="Eichler E.E."/>
            <person name="Gilna P."/>
            <person name="Lucas S.M."/>
            <person name="Myers R.M."/>
            <person name="Rubin E.M."/>
            <person name="Pennacchio L.A."/>
        </authorList>
    </citation>
    <scope>NUCLEOTIDE SEQUENCE [LARGE SCALE GENOMIC DNA]</scope>
</reference>
<organism>
    <name type="scientific">Homo sapiens</name>
    <name type="common">Human</name>
    <dbReference type="NCBI Taxonomy" id="9606"/>
    <lineage>
        <taxon>Eukaryota</taxon>
        <taxon>Metazoa</taxon>
        <taxon>Chordata</taxon>
        <taxon>Craniata</taxon>
        <taxon>Vertebrata</taxon>
        <taxon>Euteleostomi</taxon>
        <taxon>Mammalia</taxon>
        <taxon>Eutheria</taxon>
        <taxon>Euarchontoglires</taxon>
        <taxon>Primates</taxon>
        <taxon>Haplorrhini</taxon>
        <taxon>Catarrhini</taxon>
        <taxon>Hominidae</taxon>
        <taxon>Homo</taxon>
    </lineage>
</organism>